<name>EFTS_CLOD6</name>
<dbReference type="EMBL" id="AM180355">
    <property type="protein sequence ID" value="CAJ69024.1"/>
    <property type="molecule type" value="Genomic_DNA"/>
</dbReference>
<dbReference type="RefSeq" id="WP_003424535.1">
    <property type="nucleotide sequence ID" value="NZ_JAUPES010000047.1"/>
</dbReference>
<dbReference type="RefSeq" id="YP_001088653.1">
    <property type="nucleotide sequence ID" value="NC_009089.1"/>
</dbReference>
<dbReference type="SMR" id="Q185S9"/>
<dbReference type="STRING" id="272563.CD630_21390"/>
<dbReference type="EnsemblBacteria" id="CAJ69024">
    <property type="protein sequence ID" value="CAJ69024"/>
    <property type="gene ID" value="CD630_21390"/>
</dbReference>
<dbReference type="GeneID" id="66354534"/>
<dbReference type="KEGG" id="cdf:CD630_21390"/>
<dbReference type="KEGG" id="pdc:CDIF630_02370"/>
<dbReference type="PATRIC" id="fig|272563.120.peg.2259"/>
<dbReference type="eggNOG" id="COG0264">
    <property type="taxonomic scope" value="Bacteria"/>
</dbReference>
<dbReference type="OrthoDB" id="9808348at2"/>
<dbReference type="PhylomeDB" id="Q185S9"/>
<dbReference type="BioCyc" id="PDIF272563:G12WB-2296-MONOMER"/>
<dbReference type="Proteomes" id="UP000001978">
    <property type="component" value="Chromosome"/>
</dbReference>
<dbReference type="GO" id="GO:0005737">
    <property type="term" value="C:cytoplasm"/>
    <property type="evidence" value="ECO:0007669"/>
    <property type="project" value="UniProtKB-SubCell"/>
</dbReference>
<dbReference type="GO" id="GO:0003746">
    <property type="term" value="F:translation elongation factor activity"/>
    <property type="evidence" value="ECO:0007669"/>
    <property type="project" value="UniProtKB-UniRule"/>
</dbReference>
<dbReference type="CDD" id="cd14275">
    <property type="entry name" value="UBA_EF-Ts"/>
    <property type="match status" value="1"/>
</dbReference>
<dbReference type="FunFam" id="1.10.286.20:FF:000001">
    <property type="entry name" value="Elongation factor Ts"/>
    <property type="match status" value="1"/>
</dbReference>
<dbReference type="FunFam" id="1.10.8.10:FF:000001">
    <property type="entry name" value="Elongation factor Ts"/>
    <property type="match status" value="1"/>
</dbReference>
<dbReference type="Gene3D" id="1.10.286.20">
    <property type="match status" value="1"/>
</dbReference>
<dbReference type="Gene3D" id="1.10.8.10">
    <property type="entry name" value="DNA helicase RuvA subunit, C-terminal domain"/>
    <property type="match status" value="1"/>
</dbReference>
<dbReference type="Gene3D" id="3.30.479.20">
    <property type="entry name" value="Elongation factor Ts, dimerisation domain"/>
    <property type="match status" value="2"/>
</dbReference>
<dbReference type="HAMAP" id="MF_00050">
    <property type="entry name" value="EF_Ts"/>
    <property type="match status" value="1"/>
</dbReference>
<dbReference type="InterPro" id="IPR036402">
    <property type="entry name" value="EF-Ts_dimer_sf"/>
</dbReference>
<dbReference type="InterPro" id="IPR001816">
    <property type="entry name" value="Transl_elong_EFTs/EF1B"/>
</dbReference>
<dbReference type="InterPro" id="IPR014039">
    <property type="entry name" value="Transl_elong_EFTs/EF1B_dimer"/>
</dbReference>
<dbReference type="InterPro" id="IPR018101">
    <property type="entry name" value="Transl_elong_Ts_CS"/>
</dbReference>
<dbReference type="InterPro" id="IPR009060">
    <property type="entry name" value="UBA-like_sf"/>
</dbReference>
<dbReference type="NCBIfam" id="TIGR00116">
    <property type="entry name" value="tsf"/>
    <property type="match status" value="1"/>
</dbReference>
<dbReference type="PANTHER" id="PTHR11741">
    <property type="entry name" value="ELONGATION FACTOR TS"/>
    <property type="match status" value="1"/>
</dbReference>
<dbReference type="PANTHER" id="PTHR11741:SF0">
    <property type="entry name" value="ELONGATION FACTOR TS, MITOCHONDRIAL"/>
    <property type="match status" value="1"/>
</dbReference>
<dbReference type="Pfam" id="PF00889">
    <property type="entry name" value="EF_TS"/>
    <property type="match status" value="1"/>
</dbReference>
<dbReference type="SUPFAM" id="SSF54713">
    <property type="entry name" value="Elongation factor Ts (EF-Ts), dimerisation domain"/>
    <property type="match status" value="2"/>
</dbReference>
<dbReference type="SUPFAM" id="SSF46934">
    <property type="entry name" value="UBA-like"/>
    <property type="match status" value="1"/>
</dbReference>
<dbReference type="PROSITE" id="PS01126">
    <property type="entry name" value="EF_TS_1"/>
    <property type="match status" value="1"/>
</dbReference>
<dbReference type="PROSITE" id="PS01127">
    <property type="entry name" value="EF_TS_2"/>
    <property type="match status" value="1"/>
</dbReference>
<feature type="chain" id="PRO_1000006079" description="Elongation factor Ts">
    <location>
        <begin position="1"/>
        <end position="303"/>
    </location>
</feature>
<feature type="region of interest" description="Involved in Mg(2+) ion dislocation from EF-Tu" evidence="1">
    <location>
        <begin position="82"/>
        <end position="85"/>
    </location>
</feature>
<reference key="1">
    <citation type="journal article" date="2006" name="Nat. Genet.">
        <title>The multidrug-resistant human pathogen Clostridium difficile has a highly mobile, mosaic genome.</title>
        <authorList>
            <person name="Sebaihia M."/>
            <person name="Wren B.W."/>
            <person name="Mullany P."/>
            <person name="Fairweather N.F."/>
            <person name="Minton N."/>
            <person name="Stabler R."/>
            <person name="Thomson N.R."/>
            <person name="Roberts A.P."/>
            <person name="Cerdeno-Tarraga A.M."/>
            <person name="Wang H."/>
            <person name="Holden M.T.G."/>
            <person name="Wright A."/>
            <person name="Churcher C."/>
            <person name="Quail M.A."/>
            <person name="Baker S."/>
            <person name="Bason N."/>
            <person name="Brooks K."/>
            <person name="Chillingworth T."/>
            <person name="Cronin A."/>
            <person name="Davis P."/>
            <person name="Dowd L."/>
            <person name="Fraser A."/>
            <person name="Feltwell T."/>
            <person name="Hance Z."/>
            <person name="Holroyd S."/>
            <person name="Jagels K."/>
            <person name="Moule S."/>
            <person name="Mungall K."/>
            <person name="Price C."/>
            <person name="Rabbinowitsch E."/>
            <person name="Sharp S."/>
            <person name="Simmonds M."/>
            <person name="Stevens K."/>
            <person name="Unwin L."/>
            <person name="Whithead S."/>
            <person name="Dupuy B."/>
            <person name="Dougan G."/>
            <person name="Barrell B."/>
            <person name="Parkhill J."/>
        </authorList>
    </citation>
    <scope>NUCLEOTIDE SEQUENCE [LARGE SCALE GENOMIC DNA]</scope>
    <source>
        <strain>630</strain>
    </source>
</reference>
<keyword id="KW-0963">Cytoplasm</keyword>
<keyword id="KW-0251">Elongation factor</keyword>
<keyword id="KW-0648">Protein biosynthesis</keyword>
<keyword id="KW-1185">Reference proteome</keyword>
<organism>
    <name type="scientific">Clostridioides difficile (strain 630)</name>
    <name type="common">Peptoclostridium difficile</name>
    <dbReference type="NCBI Taxonomy" id="272563"/>
    <lineage>
        <taxon>Bacteria</taxon>
        <taxon>Bacillati</taxon>
        <taxon>Bacillota</taxon>
        <taxon>Clostridia</taxon>
        <taxon>Peptostreptococcales</taxon>
        <taxon>Peptostreptococcaceae</taxon>
        <taxon>Clostridioides</taxon>
    </lineage>
</organism>
<protein>
    <recommendedName>
        <fullName evidence="1">Elongation factor Ts</fullName>
        <shortName evidence="1">EF-Ts</shortName>
    </recommendedName>
</protein>
<comment type="function">
    <text evidence="1">Associates with the EF-Tu.GDP complex and induces the exchange of GDP to GTP. It remains bound to the aminoacyl-tRNA.EF-Tu.GTP complex up to the GTP hydrolysis stage on the ribosome.</text>
</comment>
<comment type="subcellular location">
    <subcellularLocation>
        <location evidence="1">Cytoplasm</location>
    </subcellularLocation>
</comment>
<comment type="similarity">
    <text evidence="1">Belongs to the EF-Ts family.</text>
</comment>
<proteinExistence type="inferred from homology"/>
<accession>Q185S9</accession>
<sequence length="303" mass="33140">MANITAQMVKELRESTGAGMMDCKKALQEAEGNMEKAVDLLREKGLSKAAKKAGRVAAEGLVAIEMNDDNTVASMVEVNSETDFVAKNEDFKVFVKDAACMALATDKEDIASLLGETHKEGITLQEVLNNRVAKIGEKLDFRRFAKVVTNGQVAGYIHGGGKIGVLVEMETEARDAKVLELGKDVAMQVAAMNPKYVSRDEVDAEYIAHETEVLTQQALNEGKPANIVEKMVKGRLEKELKEVCLLEQTFVKNPDITVKQLVADVAKAVGSDIKVVKVVRFEVGEGIQKREENFAEEVAKQLK</sequence>
<gene>
    <name evidence="1" type="primary">tsf</name>
    <name type="ordered locus">CD630_21390</name>
</gene>
<evidence type="ECO:0000255" key="1">
    <source>
        <dbReference type="HAMAP-Rule" id="MF_00050"/>
    </source>
</evidence>